<evidence type="ECO:0000255" key="1">
    <source>
        <dbReference type="PROSITE-ProRule" id="PRU00303"/>
    </source>
</evidence>
<evidence type="ECO:0000305" key="2"/>
<proteinExistence type="inferred from homology"/>
<feature type="signal peptide" evidence="1">
    <location>
        <begin position="1"/>
        <end position="22"/>
    </location>
</feature>
<feature type="chain" id="PRO_0000282074" description="Uncharacterized lipoprotein SAUSA300_2428/SAUSA300_2429">
    <location>
        <begin position="23"/>
        <end position="261"/>
    </location>
</feature>
<feature type="lipid moiety-binding region" description="N-palmitoyl cysteine" evidence="1">
    <location>
        <position position="23"/>
    </location>
</feature>
<feature type="lipid moiety-binding region" description="S-diacylglycerol cysteine" evidence="1">
    <location>
        <position position="23"/>
    </location>
</feature>
<dbReference type="EMBL" id="CP000255">
    <property type="protein sequence ID" value="ABD21054.1"/>
    <property type="status" value="ALT_FRAME"/>
    <property type="molecule type" value="Genomic_DNA"/>
</dbReference>
<dbReference type="EMBL" id="CP000255">
    <property type="protein sequence ID" value="ABD21794.1"/>
    <property type="status" value="ALT_FRAME"/>
    <property type="molecule type" value="Genomic_DNA"/>
</dbReference>
<dbReference type="SMR" id="Q2FE15"/>
<dbReference type="KEGG" id="saa:SAUSA300_2428"/>
<dbReference type="KEGG" id="saa:SAUSA300_2429"/>
<dbReference type="HOGENOM" id="CLU_071589_1_0_9"/>
<dbReference type="Proteomes" id="UP000001939">
    <property type="component" value="Chromosome"/>
</dbReference>
<dbReference type="GO" id="GO:0005886">
    <property type="term" value="C:plasma membrane"/>
    <property type="evidence" value="ECO:0007669"/>
    <property type="project" value="UniProtKB-SubCell"/>
</dbReference>
<dbReference type="Gene3D" id="2.50.20.40">
    <property type="match status" value="1"/>
</dbReference>
<dbReference type="InterPro" id="IPR007595">
    <property type="entry name" value="Csa"/>
</dbReference>
<dbReference type="InterPro" id="IPR038641">
    <property type="entry name" value="Csa_sf"/>
</dbReference>
<dbReference type="NCBIfam" id="TIGR01742">
    <property type="entry name" value="SA_tandem_lipo"/>
    <property type="match status" value="1"/>
</dbReference>
<dbReference type="Pfam" id="PF04507">
    <property type="entry name" value="DUF576"/>
    <property type="match status" value="1"/>
</dbReference>
<dbReference type="PROSITE" id="PS51257">
    <property type="entry name" value="PROKAR_LIPOPROTEIN"/>
    <property type="match status" value="1"/>
</dbReference>
<keyword id="KW-1003">Cell membrane</keyword>
<keyword id="KW-0449">Lipoprotein</keyword>
<keyword id="KW-0472">Membrane</keyword>
<keyword id="KW-0564">Palmitate</keyword>
<keyword id="KW-0732">Signal</keyword>
<comment type="subcellular location">
    <subcellularLocation>
        <location evidence="1">Cell membrane</location>
        <topology evidence="1">Lipid-anchor</topology>
    </subcellularLocation>
</comment>
<comment type="similarity">
    <text evidence="2">Belongs to the staphylococcal tandem lipoprotein family.</text>
</comment>
<comment type="sequence caution" evidence="2">
    <conflict type="frameshift">
        <sequence resource="EMBL-CDS" id="ABD21054"/>
    </conflict>
</comment>
<comment type="sequence caution" evidence="2">
    <conflict type="frameshift">
        <sequence resource="EMBL-CDS" id="ABD21794"/>
    </conflict>
</comment>
<protein>
    <recommendedName>
        <fullName>Uncharacterized lipoprotein SAUSA300_2428/SAUSA300_2429</fullName>
    </recommendedName>
</protein>
<accession>Q2FE15</accession>
<accession>Q2FE16</accession>
<sequence length="261" mass="30309">MIHSKKLTLGICLVLLIILIGGCVIMTKTNGRNAQIKENFNKTLSVYPTKNLDDFYDKEGFRDQEFDKRDKGTWIIYSEMVIEPKGKNMESRGMVLYINRNTRTTKGNFIVTEITEDSKGYSRSKEKKYPVKMENNRIIPTKPIPDDKLKKEIENFKFFVQYGNFKDFKDYKNGDISYNPNVPSYSAKYQLNNDDYNVQQLRKRYHIPTKQAPELKLKGSGNLKGSSVGSKDLEFTFVENQEENIYFSDSVEFTPSEDDKS</sequence>
<reference key="1">
    <citation type="journal article" date="2006" name="Lancet">
        <title>Complete genome sequence of USA300, an epidemic clone of community-acquired meticillin-resistant Staphylococcus aureus.</title>
        <authorList>
            <person name="Diep B.A."/>
            <person name="Gill S.R."/>
            <person name="Chang R.F."/>
            <person name="Phan T.H."/>
            <person name="Chen J.H."/>
            <person name="Davidson M.G."/>
            <person name="Lin F."/>
            <person name="Lin J."/>
            <person name="Carleton H.A."/>
            <person name="Mongodin E.F."/>
            <person name="Sensabaugh G.F."/>
            <person name="Perdreau-Remington F."/>
        </authorList>
    </citation>
    <scope>NUCLEOTIDE SEQUENCE [LARGE SCALE GENOMIC DNA]</scope>
    <source>
        <strain>USA300</strain>
    </source>
</reference>
<organism>
    <name type="scientific">Staphylococcus aureus (strain USA300)</name>
    <dbReference type="NCBI Taxonomy" id="367830"/>
    <lineage>
        <taxon>Bacteria</taxon>
        <taxon>Bacillati</taxon>
        <taxon>Bacillota</taxon>
        <taxon>Bacilli</taxon>
        <taxon>Bacillales</taxon>
        <taxon>Staphylococcaceae</taxon>
        <taxon>Staphylococcus</taxon>
    </lineage>
</organism>
<name>Y2428_STAA3</name>
<gene>
    <name type="ordered locus">SAUSA300_2428/SAUSA300_2429</name>
</gene>